<name>RL36_BURL3</name>
<feature type="chain" id="PRO_0000302173" description="Large ribosomal subunit protein bL36">
    <location>
        <begin position="1"/>
        <end position="38"/>
    </location>
</feature>
<accession>Q39KE5</accession>
<reference key="1">
    <citation type="submission" date="2005-10" db="EMBL/GenBank/DDBJ databases">
        <title>Complete sequence of chromosome 1 of Burkholderia sp. 383.</title>
        <authorList>
            <consortium name="US DOE Joint Genome Institute"/>
            <person name="Copeland A."/>
            <person name="Lucas S."/>
            <person name="Lapidus A."/>
            <person name="Barry K."/>
            <person name="Detter J.C."/>
            <person name="Glavina T."/>
            <person name="Hammon N."/>
            <person name="Israni S."/>
            <person name="Pitluck S."/>
            <person name="Chain P."/>
            <person name="Malfatti S."/>
            <person name="Shin M."/>
            <person name="Vergez L."/>
            <person name="Schmutz J."/>
            <person name="Larimer F."/>
            <person name="Land M."/>
            <person name="Kyrpides N."/>
            <person name="Lykidis A."/>
            <person name="Richardson P."/>
        </authorList>
    </citation>
    <scope>NUCLEOTIDE SEQUENCE [LARGE SCALE GENOMIC DNA]</scope>
    <source>
        <strain>ATCC 17760 / DSM 23089 / LMG 22485 / NCIMB 9086 / R18194 / 383</strain>
    </source>
</reference>
<evidence type="ECO:0000255" key="1">
    <source>
        <dbReference type="HAMAP-Rule" id="MF_00251"/>
    </source>
</evidence>
<evidence type="ECO:0000305" key="2"/>
<organism>
    <name type="scientific">Burkholderia lata (strain ATCC 17760 / DSM 23089 / LMG 22485 / NCIMB 9086 / R18194 / 383)</name>
    <dbReference type="NCBI Taxonomy" id="482957"/>
    <lineage>
        <taxon>Bacteria</taxon>
        <taxon>Pseudomonadati</taxon>
        <taxon>Pseudomonadota</taxon>
        <taxon>Betaproteobacteria</taxon>
        <taxon>Burkholderiales</taxon>
        <taxon>Burkholderiaceae</taxon>
        <taxon>Burkholderia</taxon>
        <taxon>Burkholderia cepacia complex</taxon>
    </lineage>
</organism>
<gene>
    <name evidence="1" type="primary">rpmJ</name>
    <name type="ordered locus">Bcep18194_A3469</name>
</gene>
<comment type="similarity">
    <text evidence="1">Belongs to the bacterial ribosomal protein bL36 family.</text>
</comment>
<protein>
    <recommendedName>
        <fullName evidence="1">Large ribosomal subunit protein bL36</fullName>
    </recommendedName>
    <alternativeName>
        <fullName evidence="2">50S ribosomal protein L36</fullName>
    </alternativeName>
</protein>
<keyword id="KW-0687">Ribonucleoprotein</keyword>
<keyword id="KW-0689">Ribosomal protein</keyword>
<proteinExistence type="inferred from homology"/>
<sequence length="38" mass="4410">MKVMASVKRICRNCKIIKRKGVVRVICSSDPRHKQRQG</sequence>
<dbReference type="EMBL" id="CP000151">
    <property type="protein sequence ID" value="ABB07071.1"/>
    <property type="molecule type" value="Genomic_DNA"/>
</dbReference>
<dbReference type="RefSeq" id="WP_004199844.1">
    <property type="nucleotide sequence ID" value="NZ_WNDV01000034.1"/>
</dbReference>
<dbReference type="SMR" id="Q39KE5"/>
<dbReference type="GeneID" id="98107138"/>
<dbReference type="KEGG" id="bur:Bcep18194_A3469"/>
<dbReference type="HOGENOM" id="CLU_135723_6_2_4"/>
<dbReference type="Proteomes" id="UP000002705">
    <property type="component" value="Chromosome 1"/>
</dbReference>
<dbReference type="GO" id="GO:0005737">
    <property type="term" value="C:cytoplasm"/>
    <property type="evidence" value="ECO:0007669"/>
    <property type="project" value="UniProtKB-ARBA"/>
</dbReference>
<dbReference type="GO" id="GO:1990904">
    <property type="term" value="C:ribonucleoprotein complex"/>
    <property type="evidence" value="ECO:0007669"/>
    <property type="project" value="UniProtKB-KW"/>
</dbReference>
<dbReference type="GO" id="GO:0005840">
    <property type="term" value="C:ribosome"/>
    <property type="evidence" value="ECO:0007669"/>
    <property type="project" value="UniProtKB-KW"/>
</dbReference>
<dbReference type="GO" id="GO:0003735">
    <property type="term" value="F:structural constituent of ribosome"/>
    <property type="evidence" value="ECO:0007669"/>
    <property type="project" value="InterPro"/>
</dbReference>
<dbReference type="GO" id="GO:0006412">
    <property type="term" value="P:translation"/>
    <property type="evidence" value="ECO:0007669"/>
    <property type="project" value="UniProtKB-UniRule"/>
</dbReference>
<dbReference type="HAMAP" id="MF_00251">
    <property type="entry name" value="Ribosomal_bL36"/>
    <property type="match status" value="1"/>
</dbReference>
<dbReference type="InterPro" id="IPR000473">
    <property type="entry name" value="Ribosomal_bL36"/>
</dbReference>
<dbReference type="InterPro" id="IPR035977">
    <property type="entry name" value="Ribosomal_bL36_sp"/>
</dbReference>
<dbReference type="NCBIfam" id="TIGR01022">
    <property type="entry name" value="rpmJ_bact"/>
    <property type="match status" value="1"/>
</dbReference>
<dbReference type="PANTHER" id="PTHR42888">
    <property type="entry name" value="50S RIBOSOMAL PROTEIN L36, CHLOROPLASTIC"/>
    <property type="match status" value="1"/>
</dbReference>
<dbReference type="PANTHER" id="PTHR42888:SF1">
    <property type="entry name" value="LARGE RIBOSOMAL SUBUNIT PROTEIN BL36C"/>
    <property type="match status" value="1"/>
</dbReference>
<dbReference type="Pfam" id="PF00444">
    <property type="entry name" value="Ribosomal_L36"/>
    <property type="match status" value="1"/>
</dbReference>
<dbReference type="SUPFAM" id="SSF57840">
    <property type="entry name" value="Ribosomal protein L36"/>
    <property type="match status" value="1"/>
</dbReference>
<dbReference type="PROSITE" id="PS00828">
    <property type="entry name" value="RIBOSOMAL_L36"/>
    <property type="match status" value="1"/>
</dbReference>